<protein>
    <recommendedName>
        <fullName evidence="1">Phosphoglucosamine mutase</fullName>
        <ecNumber evidence="1">5.4.2.10</ecNumber>
    </recommendedName>
</protein>
<comment type="function">
    <text evidence="1">Catalyzes the conversion of glucosamine-6-phosphate to glucosamine-1-phosphate.</text>
</comment>
<comment type="catalytic activity">
    <reaction evidence="1">
        <text>alpha-D-glucosamine 1-phosphate = D-glucosamine 6-phosphate</text>
        <dbReference type="Rhea" id="RHEA:23424"/>
        <dbReference type="ChEBI" id="CHEBI:58516"/>
        <dbReference type="ChEBI" id="CHEBI:58725"/>
        <dbReference type="EC" id="5.4.2.10"/>
    </reaction>
</comment>
<comment type="cofactor">
    <cofactor evidence="1">
        <name>Mg(2+)</name>
        <dbReference type="ChEBI" id="CHEBI:18420"/>
    </cofactor>
    <text evidence="1">Binds 1 Mg(2+) ion per subunit.</text>
</comment>
<comment type="PTM">
    <text evidence="1">Activated by phosphorylation.</text>
</comment>
<comment type="similarity">
    <text evidence="1">Belongs to the phosphohexose mutase family.</text>
</comment>
<sequence length="450" mass="48681">MKRRYFGTDGIRGQSNVFPMTPDLAMRVGIAAGTIFRRGNHRHRVVIGKDTRLSGYMLENAMVAGFTAAGLDAFILGPIPTPAVAMLTRSLRCDIGVMISASHNPYEDNGIKLFGPDGYKLSDDIEAEIEDLLEKDLSTQLAKSDDIGRAKRVDGVHDRYIEHAKRTLPRDVTLQGLRIAIDCANGAAYKVAPAVLWELGADVVTIGNEPNGTNINLNCGSTSPVALQKKVDEVRADIGIALDGDADRVIIVDENGSIVDGDQLMAVIAESWAESQQLRGNGIVATVMSNLGLERFLDERGMALARTKVGDRYVVEHMRQHNYNVGGEQSGHIVLSDYGTTGDGLVAALQILAAVKRTGRTVSEVCRRFEPVPQLLRNVRISGGKPLEDIQVQKAIADAEAELAKTGRLVIRPSGTEPLIRVMAEGDDRAQIERIVNELIGTISNVRSAA</sequence>
<gene>
    <name evidence="1" type="primary">glmM</name>
    <name type="ordered locus">RHECIAT_CH0003696</name>
</gene>
<reference key="1">
    <citation type="journal article" date="2010" name="Appl. Environ. Microbiol.">
        <title>Conserved symbiotic plasmid DNA sequences in the multireplicon pangenomic structure of Rhizobium etli.</title>
        <authorList>
            <person name="Gonzalez V."/>
            <person name="Acosta J.L."/>
            <person name="Santamaria R.I."/>
            <person name="Bustos P."/>
            <person name="Fernandez J.L."/>
            <person name="Hernandez Gonzalez I.L."/>
            <person name="Diaz R."/>
            <person name="Flores M."/>
            <person name="Palacios R."/>
            <person name="Mora J."/>
            <person name="Davila G."/>
        </authorList>
    </citation>
    <scope>NUCLEOTIDE SEQUENCE [LARGE SCALE GENOMIC DNA]</scope>
    <source>
        <strain>CIAT 652</strain>
    </source>
</reference>
<feature type="chain" id="PRO_1000201129" description="Phosphoglucosamine mutase">
    <location>
        <begin position="1"/>
        <end position="450"/>
    </location>
</feature>
<feature type="active site" description="Phosphoserine intermediate" evidence="1">
    <location>
        <position position="102"/>
    </location>
</feature>
<feature type="binding site" description="via phosphate group" evidence="1">
    <location>
        <position position="102"/>
    </location>
    <ligand>
        <name>Mg(2+)</name>
        <dbReference type="ChEBI" id="CHEBI:18420"/>
    </ligand>
</feature>
<feature type="binding site" evidence="1">
    <location>
        <position position="243"/>
    </location>
    <ligand>
        <name>Mg(2+)</name>
        <dbReference type="ChEBI" id="CHEBI:18420"/>
    </ligand>
</feature>
<feature type="binding site" evidence="1">
    <location>
        <position position="245"/>
    </location>
    <ligand>
        <name>Mg(2+)</name>
        <dbReference type="ChEBI" id="CHEBI:18420"/>
    </ligand>
</feature>
<feature type="binding site" evidence="1">
    <location>
        <position position="247"/>
    </location>
    <ligand>
        <name>Mg(2+)</name>
        <dbReference type="ChEBI" id="CHEBI:18420"/>
    </ligand>
</feature>
<feature type="modified residue" description="Phosphoserine" evidence="1">
    <location>
        <position position="102"/>
    </location>
</feature>
<dbReference type="EC" id="5.4.2.10" evidence="1"/>
<dbReference type="EMBL" id="CP001074">
    <property type="protein sequence ID" value="ACE92634.1"/>
    <property type="molecule type" value="Genomic_DNA"/>
</dbReference>
<dbReference type="SMR" id="B3PYX0"/>
<dbReference type="KEGG" id="rec:RHECIAT_CH0003696"/>
<dbReference type="eggNOG" id="COG1109">
    <property type="taxonomic scope" value="Bacteria"/>
</dbReference>
<dbReference type="HOGENOM" id="CLU_016950_7_0_5"/>
<dbReference type="Proteomes" id="UP000008817">
    <property type="component" value="Chromosome"/>
</dbReference>
<dbReference type="GO" id="GO:0005829">
    <property type="term" value="C:cytosol"/>
    <property type="evidence" value="ECO:0007669"/>
    <property type="project" value="TreeGrafter"/>
</dbReference>
<dbReference type="GO" id="GO:0000287">
    <property type="term" value="F:magnesium ion binding"/>
    <property type="evidence" value="ECO:0007669"/>
    <property type="project" value="UniProtKB-UniRule"/>
</dbReference>
<dbReference type="GO" id="GO:0008966">
    <property type="term" value="F:phosphoglucosamine mutase activity"/>
    <property type="evidence" value="ECO:0007669"/>
    <property type="project" value="UniProtKB-UniRule"/>
</dbReference>
<dbReference type="GO" id="GO:0004615">
    <property type="term" value="F:phosphomannomutase activity"/>
    <property type="evidence" value="ECO:0007669"/>
    <property type="project" value="TreeGrafter"/>
</dbReference>
<dbReference type="GO" id="GO:0005975">
    <property type="term" value="P:carbohydrate metabolic process"/>
    <property type="evidence" value="ECO:0007669"/>
    <property type="project" value="InterPro"/>
</dbReference>
<dbReference type="GO" id="GO:0009252">
    <property type="term" value="P:peptidoglycan biosynthetic process"/>
    <property type="evidence" value="ECO:0007669"/>
    <property type="project" value="TreeGrafter"/>
</dbReference>
<dbReference type="GO" id="GO:0006048">
    <property type="term" value="P:UDP-N-acetylglucosamine biosynthetic process"/>
    <property type="evidence" value="ECO:0007669"/>
    <property type="project" value="TreeGrafter"/>
</dbReference>
<dbReference type="CDD" id="cd05802">
    <property type="entry name" value="GlmM"/>
    <property type="match status" value="1"/>
</dbReference>
<dbReference type="FunFam" id="3.30.310.50:FF:000001">
    <property type="entry name" value="Phosphoglucosamine mutase"/>
    <property type="match status" value="1"/>
</dbReference>
<dbReference type="FunFam" id="3.40.120.10:FF:000001">
    <property type="entry name" value="Phosphoglucosamine mutase"/>
    <property type="match status" value="1"/>
</dbReference>
<dbReference type="FunFam" id="3.40.120.10:FF:000002">
    <property type="entry name" value="Phosphoglucosamine mutase"/>
    <property type="match status" value="1"/>
</dbReference>
<dbReference type="Gene3D" id="3.40.120.10">
    <property type="entry name" value="Alpha-D-Glucose-1,6-Bisphosphate, subunit A, domain 3"/>
    <property type="match status" value="3"/>
</dbReference>
<dbReference type="Gene3D" id="3.30.310.50">
    <property type="entry name" value="Alpha-D-phosphohexomutase, C-terminal domain"/>
    <property type="match status" value="1"/>
</dbReference>
<dbReference type="HAMAP" id="MF_01554_B">
    <property type="entry name" value="GlmM_B"/>
    <property type="match status" value="1"/>
</dbReference>
<dbReference type="InterPro" id="IPR005844">
    <property type="entry name" value="A-D-PHexomutase_a/b/a-I"/>
</dbReference>
<dbReference type="InterPro" id="IPR016055">
    <property type="entry name" value="A-D-PHexomutase_a/b/a-I/II/III"/>
</dbReference>
<dbReference type="InterPro" id="IPR005845">
    <property type="entry name" value="A-D-PHexomutase_a/b/a-II"/>
</dbReference>
<dbReference type="InterPro" id="IPR005846">
    <property type="entry name" value="A-D-PHexomutase_a/b/a-III"/>
</dbReference>
<dbReference type="InterPro" id="IPR005843">
    <property type="entry name" value="A-D-PHexomutase_C"/>
</dbReference>
<dbReference type="InterPro" id="IPR036900">
    <property type="entry name" value="A-D-PHexomutase_C_sf"/>
</dbReference>
<dbReference type="InterPro" id="IPR016066">
    <property type="entry name" value="A-D-PHexomutase_CS"/>
</dbReference>
<dbReference type="InterPro" id="IPR005841">
    <property type="entry name" value="Alpha-D-phosphohexomutase_SF"/>
</dbReference>
<dbReference type="InterPro" id="IPR006352">
    <property type="entry name" value="GlmM_bact"/>
</dbReference>
<dbReference type="InterPro" id="IPR050060">
    <property type="entry name" value="Phosphoglucosamine_mutase"/>
</dbReference>
<dbReference type="NCBIfam" id="TIGR01455">
    <property type="entry name" value="glmM"/>
    <property type="match status" value="1"/>
</dbReference>
<dbReference type="NCBIfam" id="NF008139">
    <property type="entry name" value="PRK10887.1"/>
    <property type="match status" value="1"/>
</dbReference>
<dbReference type="PANTHER" id="PTHR42946:SF1">
    <property type="entry name" value="PHOSPHOGLUCOMUTASE (ALPHA-D-GLUCOSE-1,6-BISPHOSPHATE-DEPENDENT)"/>
    <property type="match status" value="1"/>
</dbReference>
<dbReference type="PANTHER" id="PTHR42946">
    <property type="entry name" value="PHOSPHOHEXOSE MUTASE"/>
    <property type="match status" value="1"/>
</dbReference>
<dbReference type="Pfam" id="PF02878">
    <property type="entry name" value="PGM_PMM_I"/>
    <property type="match status" value="1"/>
</dbReference>
<dbReference type="Pfam" id="PF02879">
    <property type="entry name" value="PGM_PMM_II"/>
    <property type="match status" value="1"/>
</dbReference>
<dbReference type="Pfam" id="PF02880">
    <property type="entry name" value="PGM_PMM_III"/>
    <property type="match status" value="1"/>
</dbReference>
<dbReference type="Pfam" id="PF00408">
    <property type="entry name" value="PGM_PMM_IV"/>
    <property type="match status" value="1"/>
</dbReference>
<dbReference type="PRINTS" id="PR00509">
    <property type="entry name" value="PGMPMM"/>
</dbReference>
<dbReference type="SUPFAM" id="SSF55957">
    <property type="entry name" value="Phosphoglucomutase, C-terminal domain"/>
    <property type="match status" value="1"/>
</dbReference>
<dbReference type="SUPFAM" id="SSF53738">
    <property type="entry name" value="Phosphoglucomutase, first 3 domains"/>
    <property type="match status" value="3"/>
</dbReference>
<dbReference type="PROSITE" id="PS00710">
    <property type="entry name" value="PGM_PMM"/>
    <property type="match status" value="1"/>
</dbReference>
<evidence type="ECO:0000255" key="1">
    <source>
        <dbReference type="HAMAP-Rule" id="MF_01554"/>
    </source>
</evidence>
<accession>B3PYX0</accession>
<organism>
    <name type="scientific">Rhizobium etli (strain CIAT 652)</name>
    <dbReference type="NCBI Taxonomy" id="491916"/>
    <lineage>
        <taxon>Bacteria</taxon>
        <taxon>Pseudomonadati</taxon>
        <taxon>Pseudomonadota</taxon>
        <taxon>Alphaproteobacteria</taxon>
        <taxon>Hyphomicrobiales</taxon>
        <taxon>Rhizobiaceae</taxon>
        <taxon>Rhizobium/Agrobacterium group</taxon>
        <taxon>Rhizobium</taxon>
    </lineage>
</organism>
<name>GLMM_RHIE6</name>
<keyword id="KW-0413">Isomerase</keyword>
<keyword id="KW-0460">Magnesium</keyword>
<keyword id="KW-0479">Metal-binding</keyword>
<keyword id="KW-0597">Phosphoprotein</keyword>
<proteinExistence type="inferred from homology"/>